<reference key="1">
    <citation type="submission" date="2003-03" db="EMBL/GenBank/DDBJ databases">
        <title>African swine fever virus genomes.</title>
        <authorList>
            <person name="Kutish G.F."/>
            <person name="Rock D.L."/>
        </authorList>
    </citation>
    <scope>NUCLEOTIDE SEQUENCE [LARGE SCALE GENOMIC DNA]</scope>
</reference>
<reference key="2">
    <citation type="journal article" date="2020" name="J. Virol.">
        <title>The African Swine Fever Virus Transcriptome.</title>
        <authorList>
            <person name="Cackett G."/>
            <person name="Matelska D."/>
            <person name="Sykora M."/>
            <person name="Portugal R."/>
            <person name="Malecki M."/>
            <person name="Baehler J."/>
            <person name="Dixon L."/>
            <person name="Werner F."/>
        </authorList>
    </citation>
    <scope>IDENTIFICATION</scope>
</reference>
<evidence type="ECO:0000305" key="1"/>
<dbReference type="EMBL" id="AY261361">
    <property type="status" value="NOT_ANNOTATED_CDS"/>
    <property type="molecule type" value="Genomic_DNA"/>
</dbReference>
<dbReference type="Proteomes" id="UP000000860">
    <property type="component" value="Segment"/>
</dbReference>
<sequence length="76" mass="9118">MDQEQLFDKLYSLNLQLTAKNDHKKRKPVFYPEWEKDPTDTNDAVYYGLRYKPEAKKTLRSTWMKSEFESHRSSSA</sequence>
<accession>P0DTI9</accession>
<protein>
    <recommendedName>
        <fullName evidence="1">Uncharacterized protein C76L</fullName>
    </recommendedName>
</protein>
<proteinExistence type="predicted"/>
<feature type="chain" id="PRO_0000454661" description="Uncharacterized protein C76L">
    <location>
        <begin position="1"/>
        <end position="76"/>
    </location>
</feature>
<organism>
    <name type="scientific">African swine fever virus (isolate Tick/Malawi/Lil 20-1/1983)</name>
    <name type="common">ASFV</name>
    <dbReference type="NCBI Taxonomy" id="10500"/>
    <lineage>
        <taxon>Viruses</taxon>
        <taxon>Varidnaviria</taxon>
        <taxon>Bamfordvirae</taxon>
        <taxon>Nucleocytoviricota</taxon>
        <taxon>Pokkesviricetes</taxon>
        <taxon>Asfuvirales</taxon>
        <taxon>Asfarviridae</taxon>
        <taxon>Asfivirus</taxon>
        <taxon>African swine fever virus</taxon>
    </lineage>
</organism>
<organismHost>
    <name type="scientific">Ornithodoros</name>
    <name type="common">relapsing fever ticks</name>
    <dbReference type="NCBI Taxonomy" id="6937"/>
</organismHost>
<organismHost>
    <name type="scientific">Phacochoerus aethiopicus</name>
    <name type="common">Warthog</name>
    <dbReference type="NCBI Taxonomy" id="85517"/>
</organismHost>
<organismHost>
    <name type="scientific">Phacochoerus africanus</name>
    <name type="common">Warthog</name>
    <dbReference type="NCBI Taxonomy" id="41426"/>
</organismHost>
<organismHost>
    <name type="scientific">Potamochoerus larvatus</name>
    <name type="common">Bushpig</name>
    <dbReference type="NCBI Taxonomy" id="273792"/>
</organismHost>
<organismHost>
    <name type="scientific">Sus scrofa</name>
    <name type="common">Pig</name>
    <dbReference type="NCBI Taxonomy" id="9823"/>
</organismHost>
<gene>
    <name evidence="1" type="ORF">C76L</name>
</gene>
<name>C76L_ASFM2</name>